<protein>
    <recommendedName>
        <fullName>Proline-rich protein 4</fullName>
        <shortName>AtPRP4</shortName>
    </recommendedName>
</protein>
<keyword id="KW-0134">Cell wall</keyword>
<keyword id="KW-1185">Reference proteome</keyword>
<keyword id="KW-0677">Repeat</keyword>
<keyword id="KW-0964">Secreted</keyword>
<keyword id="KW-0732">Signal</keyword>
<proteinExistence type="evidence at transcript level"/>
<accession>Q9T0I5</accession>
<accession>B9DHX5</accession>
<accession>Q9M6T6</accession>
<accession>Q9M7N8</accession>
<name>PRP4_ARATH</name>
<feature type="signal peptide" evidence="1">
    <location>
        <begin position="1"/>
        <end position="29"/>
    </location>
</feature>
<feature type="chain" id="PRO_0000419275" description="Proline-rich protein 4">
    <location>
        <begin position="30"/>
        <end position="448"/>
    </location>
</feature>
<feature type="repeat" description="1">
    <location>
        <begin position="152"/>
        <end position="156"/>
    </location>
</feature>
<feature type="repeat" description="2">
    <location>
        <begin position="157"/>
        <end position="161"/>
    </location>
</feature>
<feature type="repeat" description="3">
    <location>
        <begin position="165"/>
        <end position="169"/>
    </location>
</feature>
<feature type="repeat" description="4">
    <location>
        <begin position="170"/>
        <end position="174"/>
    </location>
</feature>
<feature type="repeat" description="5">
    <location>
        <begin position="175"/>
        <end position="179"/>
    </location>
</feature>
<feature type="repeat" description="6">
    <location>
        <begin position="183"/>
        <end position="187"/>
    </location>
</feature>
<feature type="repeat" description="7">
    <location>
        <begin position="188"/>
        <end position="193"/>
    </location>
</feature>
<feature type="repeat" description="8">
    <location>
        <begin position="194"/>
        <end position="198"/>
    </location>
</feature>
<feature type="repeat" description="9">
    <location>
        <begin position="201"/>
        <end position="205"/>
    </location>
</feature>
<feature type="repeat" description="10">
    <location>
        <begin position="208"/>
        <end position="212"/>
    </location>
</feature>
<feature type="repeat" description="11">
    <location>
        <begin position="216"/>
        <end position="220"/>
    </location>
</feature>
<feature type="repeat" description="12">
    <location>
        <begin position="222"/>
        <end position="226"/>
    </location>
</feature>
<feature type="repeat" description="13">
    <location>
        <begin position="227"/>
        <end position="231"/>
    </location>
</feature>
<feature type="repeat" description="14">
    <location>
        <begin position="232"/>
        <end position="236"/>
    </location>
</feature>
<feature type="repeat" description="15">
    <location>
        <begin position="238"/>
        <end position="242"/>
    </location>
</feature>
<feature type="repeat" description="16">
    <location>
        <begin position="245"/>
        <end position="249"/>
    </location>
</feature>
<feature type="repeat" description="17">
    <location>
        <begin position="250"/>
        <end position="254"/>
    </location>
</feature>
<feature type="repeat" description="18">
    <location>
        <begin position="256"/>
        <end position="259"/>
    </location>
</feature>
<feature type="repeat" description="19">
    <location>
        <begin position="260"/>
        <end position="264"/>
    </location>
</feature>
<feature type="repeat" description="20">
    <location>
        <begin position="265"/>
        <end position="270"/>
    </location>
</feature>
<feature type="repeat" description="21">
    <location>
        <begin position="271"/>
        <end position="278"/>
    </location>
</feature>
<feature type="repeat" description="22">
    <location>
        <begin position="279"/>
        <end position="284"/>
    </location>
</feature>
<feature type="repeat" description="23">
    <location>
        <begin position="286"/>
        <end position="294"/>
    </location>
</feature>
<feature type="repeat" description="24">
    <location>
        <begin position="295"/>
        <end position="299"/>
    </location>
</feature>
<feature type="repeat" description="25">
    <location>
        <begin position="300"/>
        <end position="304"/>
    </location>
</feature>
<feature type="repeat" description="26">
    <location>
        <begin position="306"/>
        <end position="311"/>
    </location>
</feature>
<feature type="repeat" description="27">
    <location>
        <begin position="314"/>
        <end position="320"/>
    </location>
</feature>
<feature type="repeat" description="28">
    <location>
        <begin position="321"/>
        <end position="327"/>
    </location>
</feature>
<feature type="repeat" description="29">
    <location>
        <begin position="328"/>
        <end position="334"/>
    </location>
</feature>
<feature type="repeat" description="30">
    <location>
        <begin position="335"/>
        <end position="341"/>
    </location>
</feature>
<feature type="repeat" description="31">
    <location>
        <begin position="342"/>
        <end position="348"/>
    </location>
</feature>
<feature type="repeat" description="32">
    <location>
        <begin position="349"/>
        <end position="356"/>
    </location>
</feature>
<feature type="repeat" description="33">
    <location>
        <begin position="357"/>
        <end position="363"/>
    </location>
</feature>
<feature type="repeat" description="34">
    <location>
        <begin position="364"/>
        <end position="368"/>
    </location>
</feature>
<feature type="repeat" description="35">
    <location>
        <begin position="369"/>
        <end position="374"/>
    </location>
</feature>
<feature type="repeat" description="36">
    <location>
        <begin position="378"/>
        <end position="384"/>
    </location>
</feature>
<feature type="repeat" description="37">
    <location>
        <begin position="385"/>
        <end position="389"/>
    </location>
</feature>
<feature type="repeat" description="38">
    <location>
        <begin position="390"/>
        <end position="394"/>
    </location>
</feature>
<feature type="repeat" description="39">
    <location>
        <begin position="395"/>
        <end position="402"/>
    </location>
</feature>
<feature type="repeat" description="40">
    <location>
        <begin position="403"/>
        <end position="407"/>
    </location>
</feature>
<feature type="repeat" description="41">
    <location>
        <begin position="409"/>
        <end position="413"/>
    </location>
</feature>
<feature type="repeat" description="42">
    <location>
        <begin position="414"/>
        <end position="419"/>
    </location>
</feature>
<feature type="repeat" description="43">
    <location>
        <begin position="420"/>
        <end position="424"/>
    </location>
</feature>
<feature type="repeat" description="44">
    <location>
        <begin position="425"/>
        <end position="429"/>
    </location>
</feature>
<feature type="repeat" description="45">
    <location>
        <begin position="430"/>
        <end position="434"/>
    </location>
</feature>
<feature type="repeat" description="46">
    <location>
        <begin position="442"/>
        <end position="446"/>
    </location>
</feature>
<feature type="region of interest" description="46 X 5 AA approximate repeats">
    <location>
        <begin position="152"/>
        <end position="446"/>
    </location>
</feature>
<feature type="region of interest" description="Disordered" evidence="2">
    <location>
        <begin position="240"/>
        <end position="345"/>
    </location>
</feature>
<feature type="compositionally biased region" description="Pro residues" evidence="2">
    <location>
        <begin position="240"/>
        <end position="290"/>
    </location>
</feature>
<feature type="compositionally biased region" description="Pro residues" evidence="2">
    <location>
        <begin position="306"/>
        <end position="319"/>
    </location>
</feature>
<feature type="compositionally biased region" description="Pro residues" evidence="2">
    <location>
        <begin position="327"/>
        <end position="345"/>
    </location>
</feature>
<feature type="sequence conflict" description="In Ref. 2; AAF28388 and 6; AAM64336." evidence="4" ref="2 6">
    <original>Y</original>
    <variation>F</variation>
    <location>
        <position position="262"/>
    </location>
</feature>
<feature type="sequence conflict" description="In Ref. 1; AAF64551, 2; AAF28388 and 6; AAM64336." evidence="4" ref="1 2 6">
    <original>K</original>
    <variation>H</variation>
    <location>
        <position position="270"/>
    </location>
</feature>
<feature type="sequence conflict" description="In Ref. 1; AAF64551, 2; AAF28388 and 6; AAM64336." evidence="4" ref="1 2 6">
    <original>L</original>
    <variation>P</variation>
    <location>
        <position position="294"/>
    </location>
</feature>
<gene>
    <name type="primary">PRP4</name>
    <name type="ordered locus">At4g38770</name>
    <name type="ORF">T9A14.50</name>
</gene>
<sequence length="448" mass="49136">MRILPEPRGSVPCLLLLVSVLLSATLSLARVVEVVGYAESKIKTPHAFSGLRVTIDCKVNKGHFVTKGSGNIDDKGKFGLNIPHDIVSDNGALKEECYAQLHSAAGTPCPAHDGLESTKIVFLSKSGDKHILGLKQNLKFSPEICVSKFFWPMPKLPPFKGFDHPFPLPPPLELPPFLKKPCPPKYSPPVEVPPPVPVYEPPPKKEIPPPVPVYDPPPKKEVPPPVPVYKPPPKVELPPPIPKKPCPPKPPKIEHPPPVPVYKPPPKIEKPPPVPVYKPPPKIEHPPPVPVHKLPKKPCPPKKVDPPPVPVHKPPTKKPCPPKKVDPPPVPVHKPPPKIVIPPPKIEHPPPVPVYKPPPKIEHPPIYIPPIVKKPCPPPVPIYKPPVVIPKKPCPPPVPVYKPPVVVIPKKPCPPLPQLPPLPKFPPLPPKYIHHPKFGKWPPLPPHP</sequence>
<evidence type="ECO:0000255" key="1"/>
<evidence type="ECO:0000256" key="2">
    <source>
        <dbReference type="SAM" id="MobiDB-lite"/>
    </source>
</evidence>
<evidence type="ECO:0000269" key="3">
    <source>
    </source>
</evidence>
<evidence type="ECO:0000305" key="4"/>
<dbReference type="EMBL" id="AF110988">
    <property type="protein sequence ID" value="AAF64551.1"/>
    <property type="molecule type" value="Genomic_DNA"/>
</dbReference>
<dbReference type="EMBL" id="AF151217">
    <property type="protein sequence ID" value="AAF28388.1"/>
    <property type="molecule type" value="mRNA"/>
</dbReference>
<dbReference type="EMBL" id="AL035656">
    <property type="protein sequence ID" value="CAB38611.1"/>
    <property type="molecule type" value="Genomic_DNA"/>
</dbReference>
<dbReference type="EMBL" id="AL161594">
    <property type="protein sequence ID" value="CAB80540.1"/>
    <property type="molecule type" value="Genomic_DNA"/>
</dbReference>
<dbReference type="EMBL" id="CP002687">
    <property type="protein sequence ID" value="AEE86972.1"/>
    <property type="molecule type" value="Genomic_DNA"/>
</dbReference>
<dbReference type="EMBL" id="AY054212">
    <property type="protein sequence ID" value="AAL06873.1"/>
    <property type="molecule type" value="mRNA"/>
</dbReference>
<dbReference type="EMBL" id="AY092992">
    <property type="protein sequence ID" value="AAM12991.1"/>
    <property type="molecule type" value="mRNA"/>
</dbReference>
<dbReference type="EMBL" id="BT000944">
    <property type="protein sequence ID" value="AAN41344.1"/>
    <property type="molecule type" value="mRNA"/>
</dbReference>
<dbReference type="EMBL" id="BT001204">
    <property type="protein sequence ID" value="AAN65091.1"/>
    <property type="molecule type" value="mRNA"/>
</dbReference>
<dbReference type="EMBL" id="AY086263">
    <property type="protein sequence ID" value="AAM64336.1"/>
    <property type="molecule type" value="mRNA"/>
</dbReference>
<dbReference type="EMBL" id="AK317683">
    <property type="protein sequence ID" value="BAH20342.1"/>
    <property type="molecule type" value="mRNA"/>
</dbReference>
<dbReference type="PIR" id="T06076">
    <property type="entry name" value="T06076"/>
</dbReference>
<dbReference type="RefSeq" id="NP_195588.1">
    <property type="nucleotide sequence ID" value="NM_120037.4"/>
</dbReference>
<dbReference type="BioGRID" id="15312">
    <property type="interactions" value="1"/>
</dbReference>
<dbReference type="FunCoup" id="Q9T0I5">
    <property type="interactions" value="12"/>
</dbReference>
<dbReference type="IntAct" id="Q9T0I5">
    <property type="interactions" value="1"/>
</dbReference>
<dbReference type="STRING" id="3702.Q9T0I5"/>
<dbReference type="PaxDb" id="3702-AT4G38770.1"/>
<dbReference type="ProteomicsDB" id="226220"/>
<dbReference type="EnsemblPlants" id="AT4G38770.1">
    <property type="protein sequence ID" value="AT4G38770.1"/>
    <property type="gene ID" value="AT4G38770"/>
</dbReference>
<dbReference type="GeneID" id="830032"/>
<dbReference type="Gramene" id="AT4G38770.1">
    <property type="protein sequence ID" value="AT4G38770.1"/>
    <property type="gene ID" value="AT4G38770"/>
</dbReference>
<dbReference type="KEGG" id="ath:AT4G38770"/>
<dbReference type="Araport" id="AT4G38770"/>
<dbReference type="TAIR" id="AT4G38770">
    <property type="gene designation" value="PRP4"/>
</dbReference>
<dbReference type="eggNOG" id="ENOG502QTFH">
    <property type="taxonomic scope" value="Eukaryota"/>
</dbReference>
<dbReference type="HOGENOM" id="CLU_042219_1_0_1"/>
<dbReference type="InParanoid" id="Q9T0I5"/>
<dbReference type="OMA" id="FFHSIMH"/>
<dbReference type="PRO" id="PR:Q9T0I5"/>
<dbReference type="Proteomes" id="UP000006548">
    <property type="component" value="Chromosome 4"/>
</dbReference>
<dbReference type="ExpressionAtlas" id="Q9T0I5">
    <property type="expression patterns" value="baseline and differential"/>
</dbReference>
<dbReference type="GO" id="GO:0005576">
    <property type="term" value="C:extracellular region"/>
    <property type="evidence" value="ECO:0007669"/>
    <property type="project" value="UniProtKB-KW"/>
</dbReference>
<dbReference type="PANTHER" id="PTHR33935">
    <property type="entry name" value="OS10G0148100 PROTEIN"/>
    <property type="match status" value="1"/>
</dbReference>
<dbReference type="PANTHER" id="PTHR33935:SF22">
    <property type="entry name" value="OS10G0149400 PROTEIN"/>
    <property type="match status" value="1"/>
</dbReference>
<dbReference type="Pfam" id="PF01190">
    <property type="entry name" value="Pollen_Ole_e_1"/>
    <property type="match status" value="1"/>
</dbReference>
<dbReference type="PRINTS" id="PR01217">
    <property type="entry name" value="PRICHEXTENSN"/>
</dbReference>
<comment type="subcellular location">
    <subcellularLocation>
        <location evidence="4">Secreted</location>
        <location evidence="4">Cell wall</location>
    </subcellularLocation>
</comment>
<comment type="tissue specificity">
    <text evidence="3">Mostly expressed in aerial organs, particularly in expanding leaves, stems, flowers, and siliques. Also present in stipules.</text>
</comment>
<comment type="developmental stage">
    <text evidence="3">In young seedlings, detected in the hypocotyl, cotyledons and rosette leaves,mostly in expanding leaves. At flowering time, expressed in stems, cauline leaves, sepals, and, in open flowers only, in anthers and on stigma surface. Later present in pedicels of developing siliques, nectaries, and along the length of maturing siliques. Expressed in roots during the early stages of lateral root formation.</text>
</comment>
<comment type="similarity">
    <text evidence="4">Belongs to the plant proline-rich protein superfamily.</text>
</comment>
<organism>
    <name type="scientific">Arabidopsis thaliana</name>
    <name type="common">Mouse-ear cress</name>
    <dbReference type="NCBI Taxonomy" id="3702"/>
    <lineage>
        <taxon>Eukaryota</taxon>
        <taxon>Viridiplantae</taxon>
        <taxon>Streptophyta</taxon>
        <taxon>Embryophyta</taxon>
        <taxon>Tracheophyta</taxon>
        <taxon>Spermatophyta</taxon>
        <taxon>Magnoliopsida</taxon>
        <taxon>eudicotyledons</taxon>
        <taxon>Gunneridae</taxon>
        <taxon>Pentapetalae</taxon>
        <taxon>rosids</taxon>
        <taxon>malvids</taxon>
        <taxon>Brassicales</taxon>
        <taxon>Brassicaceae</taxon>
        <taxon>Camelineae</taxon>
        <taxon>Arabidopsis</taxon>
    </lineage>
</organism>
<reference key="1">
    <citation type="journal article" date="1999" name="Plant Physiol.">
        <title>Characterization and expression of four proline-rich cell wall protein genes in Arabidopsis encoding two distinct subsets of multiple domain proteins.</title>
        <authorList>
            <person name="Fowler T.J."/>
            <person name="Bernhardt C."/>
            <person name="Tierney M.L."/>
        </authorList>
    </citation>
    <scope>NUCLEOTIDE SEQUENCE [GENOMIC DNA]</scope>
    <scope>TISSUE SPECIFICITY</scope>
    <scope>DEVELOPMENTAL STAGE</scope>
    <source>
        <strain>cv. Columbia</strain>
        <strain>cv. Landsberg erecta</strain>
    </source>
</reference>
<reference key="2">
    <citation type="journal article" date="2000" name="Plant Mol. Biol.">
        <title>Isolation of genes predominantly expressed in guard cells and epidermal cells of Nicotiana glauca.</title>
        <authorList>
            <person name="Smart L.B."/>
            <person name="Cameron K.D."/>
            <person name="Bennett A.B."/>
        </authorList>
    </citation>
    <scope>NUCLEOTIDE SEQUENCE [MRNA]</scope>
    <source>
        <strain>cv. Columbia</strain>
    </source>
</reference>
<reference key="3">
    <citation type="journal article" date="1999" name="Nature">
        <title>Sequence and analysis of chromosome 4 of the plant Arabidopsis thaliana.</title>
        <authorList>
            <person name="Mayer K.F.X."/>
            <person name="Schueller C."/>
            <person name="Wambutt R."/>
            <person name="Murphy G."/>
            <person name="Volckaert G."/>
            <person name="Pohl T."/>
            <person name="Duesterhoeft A."/>
            <person name="Stiekema W."/>
            <person name="Entian K.-D."/>
            <person name="Terryn N."/>
            <person name="Harris B."/>
            <person name="Ansorge W."/>
            <person name="Brandt P."/>
            <person name="Grivell L.A."/>
            <person name="Rieger M."/>
            <person name="Weichselgartner M."/>
            <person name="de Simone V."/>
            <person name="Obermaier B."/>
            <person name="Mache R."/>
            <person name="Mueller M."/>
            <person name="Kreis M."/>
            <person name="Delseny M."/>
            <person name="Puigdomenech P."/>
            <person name="Watson M."/>
            <person name="Schmidtheini T."/>
            <person name="Reichert B."/>
            <person name="Portetelle D."/>
            <person name="Perez-Alonso M."/>
            <person name="Boutry M."/>
            <person name="Bancroft I."/>
            <person name="Vos P."/>
            <person name="Hoheisel J."/>
            <person name="Zimmermann W."/>
            <person name="Wedler H."/>
            <person name="Ridley P."/>
            <person name="Langham S.-A."/>
            <person name="McCullagh B."/>
            <person name="Bilham L."/>
            <person name="Robben J."/>
            <person name="van der Schueren J."/>
            <person name="Grymonprez B."/>
            <person name="Chuang Y.-J."/>
            <person name="Vandenbussche F."/>
            <person name="Braeken M."/>
            <person name="Weltjens I."/>
            <person name="Voet M."/>
            <person name="Bastiaens I."/>
            <person name="Aert R."/>
            <person name="Defoor E."/>
            <person name="Weitzenegger T."/>
            <person name="Bothe G."/>
            <person name="Ramsperger U."/>
            <person name="Hilbert H."/>
            <person name="Braun M."/>
            <person name="Holzer E."/>
            <person name="Brandt A."/>
            <person name="Peters S."/>
            <person name="van Staveren M."/>
            <person name="Dirkse W."/>
            <person name="Mooijman P."/>
            <person name="Klein Lankhorst R."/>
            <person name="Rose M."/>
            <person name="Hauf J."/>
            <person name="Koetter P."/>
            <person name="Berneiser S."/>
            <person name="Hempel S."/>
            <person name="Feldpausch M."/>
            <person name="Lamberth S."/>
            <person name="Van den Daele H."/>
            <person name="De Keyser A."/>
            <person name="Buysshaert C."/>
            <person name="Gielen J."/>
            <person name="Villarroel R."/>
            <person name="De Clercq R."/>
            <person name="van Montagu M."/>
            <person name="Rogers J."/>
            <person name="Cronin A."/>
            <person name="Quail M.A."/>
            <person name="Bray-Allen S."/>
            <person name="Clark L."/>
            <person name="Doggett J."/>
            <person name="Hall S."/>
            <person name="Kay M."/>
            <person name="Lennard N."/>
            <person name="McLay K."/>
            <person name="Mayes R."/>
            <person name="Pettett A."/>
            <person name="Rajandream M.A."/>
            <person name="Lyne M."/>
            <person name="Benes V."/>
            <person name="Rechmann S."/>
            <person name="Borkova D."/>
            <person name="Bloecker H."/>
            <person name="Scharfe M."/>
            <person name="Grimm M."/>
            <person name="Loehnert T.-H."/>
            <person name="Dose S."/>
            <person name="de Haan M."/>
            <person name="Maarse A.C."/>
            <person name="Schaefer M."/>
            <person name="Mueller-Auer S."/>
            <person name="Gabel C."/>
            <person name="Fuchs M."/>
            <person name="Fartmann B."/>
            <person name="Granderath K."/>
            <person name="Dauner D."/>
            <person name="Herzl A."/>
            <person name="Neumann S."/>
            <person name="Argiriou A."/>
            <person name="Vitale D."/>
            <person name="Liguori R."/>
            <person name="Piravandi E."/>
            <person name="Massenet O."/>
            <person name="Quigley F."/>
            <person name="Clabauld G."/>
            <person name="Muendlein A."/>
            <person name="Felber R."/>
            <person name="Schnabl S."/>
            <person name="Hiller R."/>
            <person name="Schmidt W."/>
            <person name="Lecharny A."/>
            <person name="Aubourg S."/>
            <person name="Chefdor F."/>
            <person name="Cooke R."/>
            <person name="Berger C."/>
            <person name="Monfort A."/>
            <person name="Casacuberta E."/>
            <person name="Gibbons T."/>
            <person name="Weber N."/>
            <person name="Vandenbol M."/>
            <person name="Bargues M."/>
            <person name="Terol J."/>
            <person name="Torres A."/>
            <person name="Perez-Perez A."/>
            <person name="Purnelle B."/>
            <person name="Bent E."/>
            <person name="Johnson S."/>
            <person name="Tacon D."/>
            <person name="Jesse T."/>
            <person name="Heijnen L."/>
            <person name="Schwarz S."/>
            <person name="Scholler P."/>
            <person name="Heber S."/>
            <person name="Francs P."/>
            <person name="Bielke C."/>
            <person name="Frishman D."/>
            <person name="Haase D."/>
            <person name="Lemcke K."/>
            <person name="Mewes H.-W."/>
            <person name="Stocker S."/>
            <person name="Zaccaria P."/>
            <person name="Bevan M."/>
            <person name="Wilson R.K."/>
            <person name="de la Bastide M."/>
            <person name="Habermann K."/>
            <person name="Parnell L."/>
            <person name="Dedhia N."/>
            <person name="Gnoj L."/>
            <person name="Schutz K."/>
            <person name="Huang E."/>
            <person name="Spiegel L."/>
            <person name="Sekhon M."/>
            <person name="Murray J."/>
            <person name="Sheet P."/>
            <person name="Cordes M."/>
            <person name="Abu-Threideh J."/>
            <person name="Stoneking T."/>
            <person name="Kalicki J."/>
            <person name="Graves T."/>
            <person name="Harmon G."/>
            <person name="Edwards J."/>
            <person name="Latreille P."/>
            <person name="Courtney L."/>
            <person name="Cloud J."/>
            <person name="Abbott A."/>
            <person name="Scott K."/>
            <person name="Johnson D."/>
            <person name="Minx P."/>
            <person name="Bentley D."/>
            <person name="Fulton B."/>
            <person name="Miller N."/>
            <person name="Greco T."/>
            <person name="Kemp K."/>
            <person name="Kramer J."/>
            <person name="Fulton L."/>
            <person name="Mardis E."/>
            <person name="Dante M."/>
            <person name="Pepin K."/>
            <person name="Hillier L.W."/>
            <person name="Nelson J."/>
            <person name="Spieth J."/>
            <person name="Ryan E."/>
            <person name="Andrews S."/>
            <person name="Geisel C."/>
            <person name="Layman D."/>
            <person name="Du H."/>
            <person name="Ali J."/>
            <person name="Berghoff A."/>
            <person name="Jones K."/>
            <person name="Drone K."/>
            <person name="Cotton M."/>
            <person name="Joshu C."/>
            <person name="Antonoiu B."/>
            <person name="Zidanic M."/>
            <person name="Strong C."/>
            <person name="Sun H."/>
            <person name="Lamar B."/>
            <person name="Yordan C."/>
            <person name="Ma P."/>
            <person name="Zhong J."/>
            <person name="Preston R."/>
            <person name="Vil D."/>
            <person name="Shekher M."/>
            <person name="Matero A."/>
            <person name="Shah R."/>
            <person name="Swaby I.K."/>
            <person name="O'Shaughnessy A."/>
            <person name="Rodriguez M."/>
            <person name="Hoffman J."/>
            <person name="Till S."/>
            <person name="Granat S."/>
            <person name="Shohdy N."/>
            <person name="Hasegawa A."/>
            <person name="Hameed A."/>
            <person name="Lodhi M."/>
            <person name="Johnson A."/>
            <person name="Chen E."/>
            <person name="Marra M.A."/>
            <person name="Martienssen R."/>
            <person name="McCombie W.R."/>
        </authorList>
    </citation>
    <scope>NUCLEOTIDE SEQUENCE [LARGE SCALE GENOMIC DNA]</scope>
    <source>
        <strain>cv. Columbia</strain>
    </source>
</reference>
<reference key="4">
    <citation type="journal article" date="2017" name="Plant J.">
        <title>Araport11: a complete reannotation of the Arabidopsis thaliana reference genome.</title>
        <authorList>
            <person name="Cheng C.Y."/>
            <person name="Krishnakumar V."/>
            <person name="Chan A.P."/>
            <person name="Thibaud-Nissen F."/>
            <person name="Schobel S."/>
            <person name="Town C.D."/>
        </authorList>
    </citation>
    <scope>GENOME REANNOTATION</scope>
    <source>
        <strain>cv. Columbia</strain>
    </source>
</reference>
<reference key="5">
    <citation type="journal article" date="2003" name="Science">
        <title>Empirical analysis of transcriptional activity in the Arabidopsis genome.</title>
        <authorList>
            <person name="Yamada K."/>
            <person name="Lim J."/>
            <person name="Dale J.M."/>
            <person name="Chen H."/>
            <person name="Shinn P."/>
            <person name="Palm C.J."/>
            <person name="Southwick A.M."/>
            <person name="Wu H.C."/>
            <person name="Kim C.J."/>
            <person name="Nguyen M."/>
            <person name="Pham P.K."/>
            <person name="Cheuk R.F."/>
            <person name="Karlin-Newmann G."/>
            <person name="Liu S.X."/>
            <person name="Lam B."/>
            <person name="Sakano H."/>
            <person name="Wu T."/>
            <person name="Yu G."/>
            <person name="Miranda M."/>
            <person name="Quach H.L."/>
            <person name="Tripp M."/>
            <person name="Chang C.H."/>
            <person name="Lee J.M."/>
            <person name="Toriumi M.J."/>
            <person name="Chan M.M."/>
            <person name="Tang C.C."/>
            <person name="Onodera C.S."/>
            <person name="Deng J.M."/>
            <person name="Akiyama K."/>
            <person name="Ansari Y."/>
            <person name="Arakawa T."/>
            <person name="Banh J."/>
            <person name="Banno F."/>
            <person name="Bowser L."/>
            <person name="Brooks S.Y."/>
            <person name="Carninci P."/>
            <person name="Chao Q."/>
            <person name="Choy N."/>
            <person name="Enju A."/>
            <person name="Goldsmith A.D."/>
            <person name="Gurjal M."/>
            <person name="Hansen N.F."/>
            <person name="Hayashizaki Y."/>
            <person name="Johnson-Hopson C."/>
            <person name="Hsuan V.W."/>
            <person name="Iida K."/>
            <person name="Karnes M."/>
            <person name="Khan S."/>
            <person name="Koesema E."/>
            <person name="Ishida J."/>
            <person name="Jiang P.X."/>
            <person name="Jones T."/>
            <person name="Kawai J."/>
            <person name="Kamiya A."/>
            <person name="Meyers C."/>
            <person name="Nakajima M."/>
            <person name="Narusaka M."/>
            <person name="Seki M."/>
            <person name="Sakurai T."/>
            <person name="Satou M."/>
            <person name="Tamse R."/>
            <person name="Vaysberg M."/>
            <person name="Wallender E.K."/>
            <person name="Wong C."/>
            <person name="Yamamura Y."/>
            <person name="Yuan S."/>
            <person name="Shinozaki K."/>
            <person name="Davis R.W."/>
            <person name="Theologis A."/>
            <person name="Ecker J.R."/>
        </authorList>
    </citation>
    <scope>NUCLEOTIDE SEQUENCE [LARGE SCALE MRNA]</scope>
    <source>
        <strain>cv. Columbia</strain>
    </source>
</reference>
<reference key="6">
    <citation type="submission" date="2002-03" db="EMBL/GenBank/DDBJ databases">
        <title>Full-length cDNA from Arabidopsis thaliana.</title>
        <authorList>
            <person name="Brover V.V."/>
            <person name="Troukhan M.E."/>
            <person name="Alexandrov N.A."/>
            <person name="Lu Y.-P."/>
            <person name="Flavell R.B."/>
            <person name="Feldmann K.A."/>
        </authorList>
    </citation>
    <scope>NUCLEOTIDE SEQUENCE [LARGE SCALE MRNA]</scope>
</reference>
<reference key="7">
    <citation type="journal article" date="2009" name="DNA Res.">
        <title>Analysis of multiple occurrences of alternative splicing events in Arabidopsis thaliana using novel sequenced full-length cDNAs.</title>
        <authorList>
            <person name="Iida K."/>
            <person name="Fukami-Kobayashi K."/>
            <person name="Toyoda A."/>
            <person name="Sakaki Y."/>
            <person name="Kobayashi M."/>
            <person name="Seki M."/>
            <person name="Shinozaki K."/>
        </authorList>
    </citation>
    <scope>NUCLEOTIDE SEQUENCE [LARGE SCALE MRNA] OF 172-448</scope>
    <source>
        <strain>cv. Columbia</strain>
        <tissue>Flower</tissue>
        <tissue>Silique</tissue>
    </source>
</reference>